<reference key="1">
    <citation type="journal article" date="2007" name="BMC Plant Biol.">
        <title>Complete DNA sequences of the plastid genomes of two parasitic flowering plant species, Cuscuta reflexa and Cuscuta gronovii.</title>
        <authorList>
            <person name="Funk H.T."/>
            <person name="Berg S."/>
            <person name="Krupinska K."/>
            <person name="Maier U.-G."/>
            <person name="Krause K."/>
        </authorList>
    </citation>
    <scope>NUCLEOTIDE SEQUENCE [LARGE SCALE GENOMIC DNA]</scope>
</reference>
<name>PSBM_CUSGR</name>
<keyword id="KW-0472">Membrane</keyword>
<keyword id="KW-0602">Photosynthesis</keyword>
<keyword id="KW-0604">Photosystem II</keyword>
<keyword id="KW-0934">Plastid</keyword>
<keyword id="KW-0674">Reaction center</keyword>
<keyword id="KW-0812">Transmembrane</keyword>
<keyword id="KW-1133">Transmembrane helix</keyword>
<evidence type="ECO:0000255" key="1">
    <source>
        <dbReference type="HAMAP-Rule" id="MF_00438"/>
    </source>
</evidence>
<evidence type="ECO:0000305" key="2"/>
<geneLocation type="plastid"/>
<organism>
    <name type="scientific">Cuscuta gronovii</name>
    <name type="common">Common dodder</name>
    <name type="synonym">Epithymum gronovii</name>
    <dbReference type="NCBI Taxonomy" id="35886"/>
    <lineage>
        <taxon>Eukaryota</taxon>
        <taxon>Viridiplantae</taxon>
        <taxon>Streptophyta</taxon>
        <taxon>Embryophyta</taxon>
        <taxon>Tracheophyta</taxon>
        <taxon>Spermatophyta</taxon>
        <taxon>Magnoliopsida</taxon>
        <taxon>eudicotyledons</taxon>
        <taxon>Gunneridae</taxon>
        <taxon>Pentapetalae</taxon>
        <taxon>asterids</taxon>
        <taxon>lamiids</taxon>
        <taxon>Solanales</taxon>
        <taxon>Convolvulaceae</taxon>
        <taxon>Cuscuteae</taxon>
        <taxon>Cuscuta</taxon>
        <taxon>Cuscuta subgen. Grammica</taxon>
        <taxon>Cuscuta sect. Oxycarpae</taxon>
    </lineage>
</organism>
<dbReference type="EMBL" id="AM711639">
    <property type="protein sequence ID" value="CAM98323.1"/>
    <property type="molecule type" value="Genomic_DNA"/>
</dbReference>
<dbReference type="RefSeq" id="YP_001430037.1">
    <property type="nucleotide sequence ID" value="NC_009765.1"/>
</dbReference>
<dbReference type="SMR" id="A7M8Z5"/>
<dbReference type="GeneID" id="5536735"/>
<dbReference type="GO" id="GO:0009523">
    <property type="term" value="C:photosystem II"/>
    <property type="evidence" value="ECO:0007669"/>
    <property type="project" value="UniProtKB-KW"/>
</dbReference>
<dbReference type="GO" id="GO:0042170">
    <property type="term" value="C:plastid membrane"/>
    <property type="evidence" value="ECO:0007669"/>
    <property type="project" value="UniProtKB-SubCell"/>
</dbReference>
<dbReference type="GO" id="GO:0042651">
    <property type="term" value="C:thylakoid membrane"/>
    <property type="evidence" value="ECO:0007669"/>
    <property type="project" value="UniProtKB-UniRule"/>
</dbReference>
<dbReference type="GO" id="GO:0019684">
    <property type="term" value="P:photosynthesis, light reaction"/>
    <property type="evidence" value="ECO:0007669"/>
    <property type="project" value="InterPro"/>
</dbReference>
<dbReference type="HAMAP" id="MF_00438">
    <property type="entry name" value="PSII_PsbM"/>
    <property type="match status" value="1"/>
</dbReference>
<dbReference type="InterPro" id="IPR007826">
    <property type="entry name" value="PSII_PsbM"/>
</dbReference>
<dbReference type="InterPro" id="IPR037269">
    <property type="entry name" value="PSII_PsbM_sf"/>
</dbReference>
<dbReference type="NCBIfam" id="TIGR03038">
    <property type="entry name" value="PS_II_psbM"/>
    <property type="match status" value="1"/>
</dbReference>
<dbReference type="PANTHER" id="PTHR35774">
    <property type="entry name" value="PHOTOSYSTEM II REACTION CENTER PROTEIN M"/>
    <property type="match status" value="1"/>
</dbReference>
<dbReference type="PANTHER" id="PTHR35774:SF1">
    <property type="entry name" value="PHOTOSYSTEM II REACTION CENTER PROTEIN M"/>
    <property type="match status" value="1"/>
</dbReference>
<dbReference type="Pfam" id="PF05151">
    <property type="entry name" value="PsbM"/>
    <property type="match status" value="1"/>
</dbReference>
<dbReference type="SUPFAM" id="SSF161033">
    <property type="entry name" value="Photosystem II reaction center protein M, PsbM"/>
    <property type="match status" value="1"/>
</dbReference>
<comment type="function">
    <text evidence="1">One of the components of the core complex of photosystem II (PSII). PSII is a light-driven water:plastoquinone oxidoreductase that uses light energy to abstract electrons from H(2)O, generating O(2) and a proton gradient subsequently used for ATP formation. It consists of a core antenna complex that captures photons, and an electron transfer chain that converts photonic excitation into a charge separation. This subunit is found at the monomer-monomer interface.</text>
</comment>
<comment type="subunit">
    <text evidence="1">PSII is composed of 1 copy each of membrane proteins PsbA, PsbB, PsbC, PsbD, PsbE, PsbF, PsbH, PsbI, PsbJ, PsbK, PsbL, PsbM, PsbT, PsbX, PsbY, PsbZ, Psb30/Ycf12, at least 3 peripheral proteins of the oxygen-evolving complex and a large number of cofactors. It forms dimeric complexes.</text>
</comment>
<comment type="subcellular location">
    <subcellularLocation>
        <location evidence="2">Plastid membrane</location>
        <topology evidence="1">Single-pass membrane protein</topology>
    </subcellularLocation>
</comment>
<comment type="similarity">
    <text evidence="1">Belongs to the PsbM family.</text>
</comment>
<comment type="caution">
    <text evidence="2">Young tissue from this organism is photosynthetic and contains some thylakoids, although the photosynthetic activity does not exceed the light compensation point.</text>
</comment>
<proteinExistence type="inferred from homology"/>
<feature type="chain" id="PRO_0000325728" description="Photosystem II reaction center protein M">
    <location>
        <begin position="1"/>
        <end position="34"/>
    </location>
</feature>
<feature type="transmembrane region" description="Helical" evidence="1">
    <location>
        <begin position="5"/>
        <end position="25"/>
    </location>
</feature>
<gene>
    <name evidence="1" type="primary">psbM</name>
</gene>
<accession>A7M8Z5</accession>
<sequence length="34" mass="3736">MEVNILAFSATALLILFPTALLLILYVKTVSQNN</sequence>
<protein>
    <recommendedName>
        <fullName evidence="1">Photosystem II reaction center protein M</fullName>
        <shortName evidence="1">PSII-M</shortName>
    </recommendedName>
</protein>